<feature type="chain" id="PRO_0000362180" description="Protein PsbN">
    <location>
        <begin position="1"/>
        <end position="43"/>
    </location>
</feature>
<feature type="transmembrane region" description="Helical" evidence="1">
    <location>
        <begin position="7"/>
        <end position="27"/>
    </location>
</feature>
<protein>
    <recommendedName>
        <fullName evidence="1">Protein PsbN</fullName>
    </recommendedName>
</protein>
<sequence>METATLVAIFISGLLVSFTGYALYTAFGQPSQQLRDPFEEHGD</sequence>
<name>PSBN_CAPBU</name>
<proteinExistence type="inferred from homology"/>
<dbReference type="EMBL" id="AP009371">
    <property type="protein sequence ID" value="BAF50225.1"/>
    <property type="molecule type" value="Genomic_DNA"/>
</dbReference>
<dbReference type="RefSeq" id="YP_001123401.1">
    <property type="nucleotide sequence ID" value="NC_009270.1"/>
</dbReference>
<dbReference type="SMR" id="A4QKM0"/>
<dbReference type="GeneID" id="4961648"/>
<dbReference type="GO" id="GO:0009535">
    <property type="term" value="C:chloroplast thylakoid membrane"/>
    <property type="evidence" value="ECO:0007669"/>
    <property type="project" value="UniProtKB-SubCell"/>
</dbReference>
<dbReference type="GO" id="GO:0015979">
    <property type="term" value="P:photosynthesis"/>
    <property type="evidence" value="ECO:0007669"/>
    <property type="project" value="InterPro"/>
</dbReference>
<dbReference type="HAMAP" id="MF_00293">
    <property type="entry name" value="PSII_PsbN"/>
    <property type="match status" value="1"/>
</dbReference>
<dbReference type="InterPro" id="IPR003398">
    <property type="entry name" value="PSII_PsbN"/>
</dbReference>
<dbReference type="PANTHER" id="PTHR35326">
    <property type="entry name" value="PROTEIN PSBN"/>
    <property type="match status" value="1"/>
</dbReference>
<dbReference type="PANTHER" id="PTHR35326:SF3">
    <property type="entry name" value="PROTEIN PSBN"/>
    <property type="match status" value="1"/>
</dbReference>
<dbReference type="Pfam" id="PF02468">
    <property type="entry name" value="PsbN"/>
    <property type="match status" value="1"/>
</dbReference>
<geneLocation type="chloroplast"/>
<gene>
    <name evidence="1" type="primary">psbN</name>
</gene>
<evidence type="ECO:0000255" key="1">
    <source>
        <dbReference type="HAMAP-Rule" id="MF_00293"/>
    </source>
</evidence>
<comment type="function">
    <text evidence="1">May play a role in photosystem I and II biogenesis.</text>
</comment>
<comment type="subcellular location">
    <subcellularLocation>
        <location evidence="1">Plastid</location>
        <location evidence="1">Chloroplast thylakoid membrane</location>
        <topology evidence="1">Single-pass membrane protein</topology>
    </subcellularLocation>
</comment>
<comment type="similarity">
    <text evidence="1">Belongs to the PsbN family.</text>
</comment>
<comment type="caution">
    <text evidence="1">Originally thought to be a component of PSII; based on experiments in Synechocystis, N.tabacum and barley, and its absence from PSII in T.elongatus and T.vulcanus, this is probably not true.</text>
</comment>
<keyword id="KW-0150">Chloroplast</keyword>
<keyword id="KW-0472">Membrane</keyword>
<keyword id="KW-0934">Plastid</keyword>
<keyword id="KW-0793">Thylakoid</keyword>
<keyword id="KW-0812">Transmembrane</keyword>
<keyword id="KW-1133">Transmembrane helix</keyword>
<reference key="1">
    <citation type="submission" date="2007-03" db="EMBL/GenBank/DDBJ databases">
        <title>Sequencing analysis of Capsella bursa-pastoris JO22 chloroplast DNA.</title>
        <authorList>
            <person name="Hosouchi T."/>
            <person name="Tsuruoka H."/>
            <person name="Kotani H."/>
        </authorList>
    </citation>
    <scope>NUCLEOTIDE SEQUENCE [LARGE SCALE GENOMIC DNA]</scope>
</reference>
<accession>A4QKM0</accession>
<organism>
    <name type="scientific">Capsella bursa-pastoris</name>
    <name type="common">Shepherd's purse</name>
    <name type="synonym">Thlaspi bursa-pastoris</name>
    <dbReference type="NCBI Taxonomy" id="3719"/>
    <lineage>
        <taxon>Eukaryota</taxon>
        <taxon>Viridiplantae</taxon>
        <taxon>Streptophyta</taxon>
        <taxon>Embryophyta</taxon>
        <taxon>Tracheophyta</taxon>
        <taxon>Spermatophyta</taxon>
        <taxon>Magnoliopsida</taxon>
        <taxon>eudicotyledons</taxon>
        <taxon>Gunneridae</taxon>
        <taxon>Pentapetalae</taxon>
        <taxon>rosids</taxon>
        <taxon>malvids</taxon>
        <taxon>Brassicales</taxon>
        <taxon>Brassicaceae</taxon>
        <taxon>Camelineae</taxon>
        <taxon>Capsella</taxon>
    </lineage>
</organism>